<proteinExistence type="inferred from homology"/>
<dbReference type="EC" id="2.7.11.22"/>
<dbReference type="EMBL" id="AB033276">
    <property type="protein sequence ID" value="BAB12209.1"/>
    <property type="molecule type" value="Genomic_DNA"/>
</dbReference>
<dbReference type="SMR" id="Q9HGY5"/>
<dbReference type="EnsemblFungi" id="C1_04520C_A-T">
    <property type="protein sequence ID" value="C1_04520C_A-T-p1"/>
    <property type="gene ID" value="C1_04520C_A"/>
</dbReference>
<dbReference type="VEuPathDB" id="FungiDB:C1_04520C_A"/>
<dbReference type="VEuPathDB" id="FungiDB:CAWG_00942"/>
<dbReference type="GO" id="GO:0005935">
    <property type="term" value="C:cellular bud neck"/>
    <property type="evidence" value="ECO:0007669"/>
    <property type="project" value="EnsemblFungi"/>
</dbReference>
<dbReference type="GO" id="GO:0005737">
    <property type="term" value="C:cytoplasm"/>
    <property type="evidence" value="ECO:0007669"/>
    <property type="project" value="TreeGrafter"/>
</dbReference>
<dbReference type="GO" id="GO:0005634">
    <property type="term" value="C:nucleus"/>
    <property type="evidence" value="ECO:0007669"/>
    <property type="project" value="EnsemblFungi"/>
</dbReference>
<dbReference type="GO" id="GO:1990860">
    <property type="term" value="C:Pho85-Pho80 CDK-cyclin complex"/>
    <property type="evidence" value="ECO:0007669"/>
    <property type="project" value="EnsemblFungi"/>
</dbReference>
<dbReference type="GO" id="GO:0005524">
    <property type="term" value="F:ATP binding"/>
    <property type="evidence" value="ECO:0007669"/>
    <property type="project" value="UniProtKB-KW"/>
</dbReference>
<dbReference type="GO" id="GO:0004693">
    <property type="term" value="F:cyclin-dependent protein serine/threonine kinase activity"/>
    <property type="evidence" value="ECO:0007669"/>
    <property type="project" value="UniProtKB-EC"/>
</dbReference>
<dbReference type="GO" id="GO:0106310">
    <property type="term" value="F:protein serine kinase activity"/>
    <property type="evidence" value="ECO:0007669"/>
    <property type="project" value="RHEA"/>
</dbReference>
<dbReference type="GO" id="GO:0006974">
    <property type="term" value="P:DNA damage response"/>
    <property type="evidence" value="ECO:0007669"/>
    <property type="project" value="EnsemblFungi"/>
</dbReference>
<dbReference type="GO" id="GO:0030447">
    <property type="term" value="P:filamentous growth"/>
    <property type="evidence" value="ECO:0007669"/>
    <property type="project" value="UniProtKB-ARBA"/>
</dbReference>
<dbReference type="GO" id="GO:0000082">
    <property type="term" value="P:G1/S transition of mitotic cell cycle"/>
    <property type="evidence" value="ECO:0007669"/>
    <property type="project" value="EnsemblFungi"/>
</dbReference>
<dbReference type="GO" id="GO:0055088">
    <property type="term" value="P:lipid homeostasis"/>
    <property type="evidence" value="ECO:0007669"/>
    <property type="project" value="EnsemblFungi"/>
</dbReference>
<dbReference type="GO" id="GO:0050849">
    <property type="term" value="P:negative regulation of calcium-mediated signaling"/>
    <property type="evidence" value="ECO:0007669"/>
    <property type="project" value="EnsemblFungi"/>
</dbReference>
<dbReference type="GO" id="GO:0045719">
    <property type="term" value="P:negative regulation of glycogen biosynthetic process"/>
    <property type="evidence" value="ECO:0007669"/>
    <property type="project" value="EnsemblFungi"/>
</dbReference>
<dbReference type="GO" id="GO:0016242">
    <property type="term" value="P:negative regulation of macroautophagy"/>
    <property type="evidence" value="ECO:0007669"/>
    <property type="project" value="EnsemblFungi"/>
</dbReference>
<dbReference type="GO" id="GO:0045936">
    <property type="term" value="P:negative regulation of phosphate metabolic process"/>
    <property type="evidence" value="ECO:0007669"/>
    <property type="project" value="EnsemblFungi"/>
</dbReference>
<dbReference type="GO" id="GO:0000122">
    <property type="term" value="P:negative regulation of transcription by RNA polymerase II"/>
    <property type="evidence" value="ECO:0007669"/>
    <property type="project" value="EnsemblFungi"/>
</dbReference>
<dbReference type="GO" id="GO:0016239">
    <property type="term" value="P:positive regulation of macroautophagy"/>
    <property type="evidence" value="ECO:0007669"/>
    <property type="project" value="EnsemblFungi"/>
</dbReference>
<dbReference type="GO" id="GO:0071073">
    <property type="term" value="P:positive regulation of phospholipid biosynthetic process"/>
    <property type="evidence" value="ECO:0007669"/>
    <property type="project" value="EnsemblFungi"/>
</dbReference>
<dbReference type="GO" id="GO:0031648">
    <property type="term" value="P:protein destabilization"/>
    <property type="evidence" value="ECO:0007669"/>
    <property type="project" value="EnsemblFungi"/>
</dbReference>
<dbReference type="GO" id="GO:1901987">
    <property type="term" value="P:regulation of cell cycle phase transition"/>
    <property type="evidence" value="ECO:0007669"/>
    <property type="project" value="EnsemblFungi"/>
</dbReference>
<dbReference type="GO" id="GO:0051302">
    <property type="term" value="P:regulation of cell division"/>
    <property type="evidence" value="ECO:0007669"/>
    <property type="project" value="EnsemblFungi"/>
</dbReference>
<dbReference type="GO" id="GO:0032878">
    <property type="term" value="P:regulation of establishment or maintenance of cell polarity"/>
    <property type="evidence" value="ECO:0007669"/>
    <property type="project" value="EnsemblFungi"/>
</dbReference>
<dbReference type="GO" id="GO:0046822">
    <property type="term" value="P:regulation of nucleocytoplasmic transport"/>
    <property type="evidence" value="ECO:0007669"/>
    <property type="project" value="EnsemblFungi"/>
</dbReference>
<dbReference type="GO" id="GO:0032880">
    <property type="term" value="P:regulation of protein localization"/>
    <property type="evidence" value="ECO:0007669"/>
    <property type="project" value="EnsemblFungi"/>
</dbReference>
<dbReference type="FunFam" id="3.30.200.20:FF:000062">
    <property type="entry name" value="PHO system negative regulator"/>
    <property type="match status" value="1"/>
</dbReference>
<dbReference type="FunFam" id="1.10.510.10:FF:000410">
    <property type="entry name" value="Probable PHO85-cyclin-dependent protein kinase"/>
    <property type="match status" value="1"/>
</dbReference>
<dbReference type="Gene3D" id="3.30.200.20">
    <property type="entry name" value="Phosphorylase Kinase, domain 1"/>
    <property type="match status" value="1"/>
</dbReference>
<dbReference type="Gene3D" id="1.10.510.10">
    <property type="entry name" value="Transferase(Phosphotransferase) domain 1"/>
    <property type="match status" value="1"/>
</dbReference>
<dbReference type="InterPro" id="IPR050108">
    <property type="entry name" value="CDK"/>
</dbReference>
<dbReference type="InterPro" id="IPR011009">
    <property type="entry name" value="Kinase-like_dom_sf"/>
</dbReference>
<dbReference type="InterPro" id="IPR000719">
    <property type="entry name" value="Prot_kinase_dom"/>
</dbReference>
<dbReference type="InterPro" id="IPR017441">
    <property type="entry name" value="Protein_kinase_ATP_BS"/>
</dbReference>
<dbReference type="InterPro" id="IPR008271">
    <property type="entry name" value="Ser/Thr_kinase_AS"/>
</dbReference>
<dbReference type="PANTHER" id="PTHR24056">
    <property type="entry name" value="CELL DIVISION PROTEIN KINASE"/>
    <property type="match status" value="1"/>
</dbReference>
<dbReference type="PANTHER" id="PTHR24056:SF46">
    <property type="entry name" value="CYCLIN-DEPENDENT KINASE 5"/>
    <property type="match status" value="1"/>
</dbReference>
<dbReference type="Pfam" id="PF00069">
    <property type="entry name" value="Pkinase"/>
    <property type="match status" value="1"/>
</dbReference>
<dbReference type="SMART" id="SM00220">
    <property type="entry name" value="S_TKc"/>
    <property type="match status" value="1"/>
</dbReference>
<dbReference type="SUPFAM" id="SSF56112">
    <property type="entry name" value="Protein kinase-like (PK-like)"/>
    <property type="match status" value="1"/>
</dbReference>
<dbReference type="PROSITE" id="PS00107">
    <property type="entry name" value="PROTEIN_KINASE_ATP"/>
    <property type="match status" value="1"/>
</dbReference>
<dbReference type="PROSITE" id="PS50011">
    <property type="entry name" value="PROTEIN_KINASE_DOM"/>
    <property type="match status" value="1"/>
</dbReference>
<dbReference type="PROSITE" id="PS00108">
    <property type="entry name" value="PROTEIN_KINASE_ST"/>
    <property type="match status" value="1"/>
</dbReference>
<keyword id="KW-0067">ATP-binding</keyword>
<keyword id="KW-0418">Kinase</keyword>
<keyword id="KW-0547">Nucleotide-binding</keyword>
<keyword id="KW-0723">Serine/threonine-protein kinase</keyword>
<keyword id="KW-0808">Transferase</keyword>
<feature type="chain" id="PRO_0000086516" description="Negative regulator of the PHO system">
    <location>
        <begin position="1"/>
        <end position="326"/>
    </location>
</feature>
<feature type="domain" description="Protein kinase" evidence="2">
    <location>
        <begin position="8"/>
        <end position="290"/>
    </location>
</feature>
<feature type="region of interest" description="Disordered" evidence="4">
    <location>
        <begin position="300"/>
        <end position="326"/>
    </location>
</feature>
<feature type="compositionally biased region" description="Low complexity" evidence="4">
    <location>
        <begin position="305"/>
        <end position="326"/>
    </location>
</feature>
<feature type="active site" description="Proton acceptor" evidence="2 3">
    <location>
        <position position="131"/>
    </location>
</feature>
<feature type="binding site" evidence="2">
    <location>
        <begin position="14"/>
        <end position="22"/>
    </location>
    <ligand>
        <name>ATP</name>
        <dbReference type="ChEBI" id="CHEBI:30616"/>
    </ligand>
</feature>
<feature type="binding site" evidence="2">
    <location>
        <position position="37"/>
    </location>
    <ligand>
        <name>ATP</name>
        <dbReference type="ChEBI" id="CHEBI:30616"/>
    </ligand>
</feature>
<evidence type="ECO:0000250" key="1"/>
<evidence type="ECO:0000255" key="2">
    <source>
        <dbReference type="PROSITE-ProRule" id="PRU00159"/>
    </source>
</evidence>
<evidence type="ECO:0000255" key="3">
    <source>
        <dbReference type="PROSITE-ProRule" id="PRU10027"/>
    </source>
</evidence>
<evidence type="ECO:0000256" key="4">
    <source>
        <dbReference type="SAM" id="MobiDB-lite"/>
    </source>
</evidence>
<evidence type="ECO:0000305" key="5"/>
<gene>
    <name type="primary">PHO85</name>
</gene>
<reference key="1">
    <citation type="journal article" date="2000" name="Yeast">
        <title>Identification of a Candida albicans homologue of the PHO85 gene, a negative regulator of the PHO system in Saccharomyces cerevisiae.</title>
        <authorList>
            <person name="Miyakawa Y."/>
        </authorList>
    </citation>
    <scope>NUCLEOTIDE SEQUENCE [GENOMIC DNA]</scope>
</reference>
<protein>
    <recommendedName>
        <fullName>Negative regulator of the PHO system</fullName>
        <ecNumber>2.7.11.22</ecNumber>
    </recommendedName>
    <alternativeName>
        <fullName>CaPHO85</fullName>
    </alternativeName>
    <alternativeName>
        <fullName>Serine/threonine-protein kinase PHO85</fullName>
    </alternativeName>
</protein>
<sequence>MTGSSSQFQQLEKLGEGTYATVYKGRNRATGALVALKEISLDSEEGTPSTAIREISLMKELDHENIVTLYDVIHTENKLTLVFEYMDKDLKKYMEVHGQQSALDLKVVKSFMFQLLKGIMFCHDNRVLHRDLKPQNLLINNKGELKLGDFGLARAFGIPFNTFSNEVVTLWYRAPDVLLGSRAYTTSIDIWSAGCIFAEMCTGKPLFPGTANEDQLIKIFRLMGTPNERTWPGISQYTNYKNNWQIFVPQDLRLIVPNLDSMGLNLLQSLLQMRPESRITARQALQHPWFHEITMPNAVPQHLSDPYQQQQQQQQHPHQPIIDQQY</sequence>
<comment type="function">
    <text evidence="1">When phosphate concentrations are high it phosphorylates the PHO4 transcription factor thus establishing repression.</text>
</comment>
<comment type="catalytic activity">
    <reaction>
        <text>L-seryl-[protein] + ATP = O-phospho-L-seryl-[protein] + ADP + H(+)</text>
        <dbReference type="Rhea" id="RHEA:17989"/>
        <dbReference type="Rhea" id="RHEA-COMP:9863"/>
        <dbReference type="Rhea" id="RHEA-COMP:11604"/>
        <dbReference type="ChEBI" id="CHEBI:15378"/>
        <dbReference type="ChEBI" id="CHEBI:29999"/>
        <dbReference type="ChEBI" id="CHEBI:30616"/>
        <dbReference type="ChEBI" id="CHEBI:83421"/>
        <dbReference type="ChEBI" id="CHEBI:456216"/>
        <dbReference type="EC" id="2.7.11.22"/>
    </reaction>
</comment>
<comment type="catalytic activity">
    <reaction>
        <text>L-threonyl-[protein] + ATP = O-phospho-L-threonyl-[protein] + ADP + H(+)</text>
        <dbReference type="Rhea" id="RHEA:46608"/>
        <dbReference type="Rhea" id="RHEA-COMP:11060"/>
        <dbReference type="Rhea" id="RHEA-COMP:11605"/>
        <dbReference type="ChEBI" id="CHEBI:15378"/>
        <dbReference type="ChEBI" id="CHEBI:30013"/>
        <dbReference type="ChEBI" id="CHEBI:30616"/>
        <dbReference type="ChEBI" id="CHEBI:61977"/>
        <dbReference type="ChEBI" id="CHEBI:456216"/>
        <dbReference type="EC" id="2.7.11.22"/>
    </reaction>
</comment>
<comment type="subunit">
    <text evidence="1">Interacts with a number of cyclins.</text>
</comment>
<comment type="similarity">
    <text evidence="5">Belongs to the protein kinase superfamily. CMGC Ser/Thr protein kinase family. CDC2/CDKX subfamily.</text>
</comment>
<name>PHO85_CANAX</name>
<accession>Q9HGY5</accession>
<organism>
    <name type="scientific">Candida albicans</name>
    <name type="common">Yeast</name>
    <dbReference type="NCBI Taxonomy" id="5476"/>
    <lineage>
        <taxon>Eukaryota</taxon>
        <taxon>Fungi</taxon>
        <taxon>Dikarya</taxon>
        <taxon>Ascomycota</taxon>
        <taxon>Saccharomycotina</taxon>
        <taxon>Pichiomycetes</taxon>
        <taxon>Debaryomycetaceae</taxon>
        <taxon>Candida/Lodderomyces clade</taxon>
        <taxon>Candida</taxon>
    </lineage>
</organism>